<name>SYGB_STRS7</name>
<protein>
    <recommendedName>
        <fullName evidence="1">Glycine--tRNA ligase beta subunit</fullName>
        <ecNumber evidence="1">6.1.1.14</ecNumber>
    </recommendedName>
    <alternativeName>
        <fullName evidence="1">Glycyl-tRNA synthetase beta subunit</fullName>
        <shortName evidence="1">GlyRS</shortName>
    </alternativeName>
</protein>
<comment type="catalytic activity">
    <reaction evidence="1">
        <text>tRNA(Gly) + glycine + ATP = glycyl-tRNA(Gly) + AMP + diphosphate</text>
        <dbReference type="Rhea" id="RHEA:16013"/>
        <dbReference type="Rhea" id="RHEA-COMP:9664"/>
        <dbReference type="Rhea" id="RHEA-COMP:9683"/>
        <dbReference type="ChEBI" id="CHEBI:30616"/>
        <dbReference type="ChEBI" id="CHEBI:33019"/>
        <dbReference type="ChEBI" id="CHEBI:57305"/>
        <dbReference type="ChEBI" id="CHEBI:78442"/>
        <dbReference type="ChEBI" id="CHEBI:78522"/>
        <dbReference type="ChEBI" id="CHEBI:456215"/>
        <dbReference type="EC" id="6.1.1.14"/>
    </reaction>
</comment>
<comment type="subunit">
    <text evidence="1">Tetramer of two alpha and two beta subunits.</text>
</comment>
<comment type="subcellular location">
    <subcellularLocation>
        <location evidence="1">Cytoplasm</location>
    </subcellularLocation>
</comment>
<comment type="similarity">
    <text evidence="1">Belongs to the class-II aminoacyl-tRNA synthetase family.</text>
</comment>
<proteinExistence type="inferred from homology"/>
<reference key="1">
    <citation type="journal article" date="2009" name="PLoS Pathog.">
        <title>Genomic evidence for the evolution of Streptococcus equi: host restriction, increased virulence, and genetic exchange with human pathogens.</title>
        <authorList>
            <person name="Holden M.T.G."/>
            <person name="Heather Z."/>
            <person name="Paillot R."/>
            <person name="Steward K.F."/>
            <person name="Webb K."/>
            <person name="Ainslie F."/>
            <person name="Jourdan T."/>
            <person name="Bason N.C."/>
            <person name="Holroyd N.E."/>
            <person name="Mungall K."/>
            <person name="Quail M.A."/>
            <person name="Sanders M."/>
            <person name="Simmonds M."/>
            <person name="Willey D."/>
            <person name="Brooks K."/>
            <person name="Aanensen D.M."/>
            <person name="Spratt B.G."/>
            <person name="Jolley K.A."/>
            <person name="Maiden M.C.J."/>
            <person name="Kehoe M."/>
            <person name="Chanter N."/>
            <person name="Bentley S.D."/>
            <person name="Robinson C."/>
            <person name="Maskell D.J."/>
            <person name="Parkhill J."/>
            <person name="Waller A.S."/>
        </authorList>
    </citation>
    <scope>NUCLEOTIDE SEQUENCE [LARGE SCALE GENOMIC DNA]</scope>
    <source>
        <strain>H70</strain>
    </source>
</reference>
<evidence type="ECO:0000255" key="1">
    <source>
        <dbReference type="HAMAP-Rule" id="MF_00255"/>
    </source>
</evidence>
<feature type="chain" id="PRO_1000204612" description="Glycine--tRNA ligase beta subunit">
    <location>
        <begin position="1"/>
        <end position="679"/>
    </location>
</feature>
<gene>
    <name evidence="1" type="primary">glyS</name>
    <name type="ordered locus">SZO_15000</name>
</gene>
<keyword id="KW-0030">Aminoacyl-tRNA synthetase</keyword>
<keyword id="KW-0067">ATP-binding</keyword>
<keyword id="KW-0963">Cytoplasm</keyword>
<keyword id="KW-0436">Ligase</keyword>
<keyword id="KW-0547">Nucleotide-binding</keyword>
<keyword id="KW-0648">Protein biosynthesis</keyword>
<sequence length="679" mass="75376">MTKDLLVELGLEELPAYVVTPSEKQLVQRMADFLKDNRLSYDAIEGFSTPRRLAVRVLGLADQQTDLTEDFKGPSKKIALDADGQFSKAAQGFVRGKGLTVDDIEFREVKGEEYVYVTKHEAGKQAKGVLAAVPEVLASLTFPVSMHWANNSFDYIRPVHSLIVLLDDEPLELDFLDIHSGRISRGHRFLGEETSITSADSYEADLRSQFVIASAKERQEMIIAQIRAIEAEQKVQVDIDEDLLNEVLNLVEYPTAFMGSFDPKYLEIPEEVLVTSMKNHQRYFVVRDQAGKLMPNFISVRNGNAKHLQNVIKGNEKVLVARLEDGEFFWREDQKLFIEDLVAKLAHVTFHEKIGSLAEHMDRTKVIAAFLADQAGLSEAEKSAVARAAQIYKFDLLTGMVGEFDELQGIMGEKYALLAGEAAAVATAIREHYLPDSAEGELPETKVGAVLALADKLDTLLSFFSVGLIPSGSNDPYALRRATQGIVRILEHFGWSIPMDKLIDSLYELSFESLTYQHKAEVLDFICARVDKMMGSAIPKDIREAVLASSSFVVPELLARAEALAAASQLDTYKPAVESLSRVFNLAKKAVDAVLIDASLFENDYERALAQAVDSLVLSGSAKEQLAQVFALSPVIDDFFDHTMVMTEDEAIRCNRLALLAELVKKVETIAAFDRLNTK</sequence>
<accession>C0MDQ3</accession>
<dbReference type="EC" id="6.1.1.14" evidence="1"/>
<dbReference type="EMBL" id="FM204884">
    <property type="protein sequence ID" value="CAX00162.1"/>
    <property type="molecule type" value="Genomic_DNA"/>
</dbReference>
<dbReference type="SMR" id="C0MDQ3"/>
<dbReference type="KEGG" id="seq:SZO_15000"/>
<dbReference type="eggNOG" id="COG0751">
    <property type="taxonomic scope" value="Bacteria"/>
</dbReference>
<dbReference type="HOGENOM" id="CLU_007220_2_2_9"/>
<dbReference type="Proteomes" id="UP000001368">
    <property type="component" value="Chromosome"/>
</dbReference>
<dbReference type="GO" id="GO:0005829">
    <property type="term" value="C:cytosol"/>
    <property type="evidence" value="ECO:0007669"/>
    <property type="project" value="TreeGrafter"/>
</dbReference>
<dbReference type="GO" id="GO:0005524">
    <property type="term" value="F:ATP binding"/>
    <property type="evidence" value="ECO:0007669"/>
    <property type="project" value="UniProtKB-UniRule"/>
</dbReference>
<dbReference type="GO" id="GO:0004820">
    <property type="term" value="F:glycine-tRNA ligase activity"/>
    <property type="evidence" value="ECO:0007669"/>
    <property type="project" value="UniProtKB-UniRule"/>
</dbReference>
<dbReference type="GO" id="GO:0006426">
    <property type="term" value="P:glycyl-tRNA aminoacylation"/>
    <property type="evidence" value="ECO:0007669"/>
    <property type="project" value="UniProtKB-UniRule"/>
</dbReference>
<dbReference type="HAMAP" id="MF_00255">
    <property type="entry name" value="Gly_tRNA_synth_beta"/>
    <property type="match status" value="1"/>
</dbReference>
<dbReference type="InterPro" id="IPR015944">
    <property type="entry name" value="Gly-tRNA-synth_bsu"/>
</dbReference>
<dbReference type="InterPro" id="IPR006194">
    <property type="entry name" value="Gly-tRNA-synth_heterodimer"/>
</dbReference>
<dbReference type="NCBIfam" id="TIGR00211">
    <property type="entry name" value="glyS"/>
    <property type="match status" value="1"/>
</dbReference>
<dbReference type="PANTHER" id="PTHR30075:SF2">
    <property type="entry name" value="GLYCINE--TRNA LIGASE, CHLOROPLASTIC_MITOCHONDRIAL 2"/>
    <property type="match status" value="1"/>
</dbReference>
<dbReference type="PANTHER" id="PTHR30075">
    <property type="entry name" value="GLYCYL-TRNA SYNTHETASE"/>
    <property type="match status" value="1"/>
</dbReference>
<dbReference type="Pfam" id="PF02092">
    <property type="entry name" value="tRNA_synt_2f"/>
    <property type="match status" value="1"/>
</dbReference>
<dbReference type="PRINTS" id="PR01045">
    <property type="entry name" value="TRNASYNTHGB"/>
</dbReference>
<dbReference type="SUPFAM" id="SSF109604">
    <property type="entry name" value="HD-domain/PDEase-like"/>
    <property type="match status" value="1"/>
</dbReference>
<dbReference type="PROSITE" id="PS50861">
    <property type="entry name" value="AA_TRNA_LIGASE_II_GLYAB"/>
    <property type="match status" value="1"/>
</dbReference>
<organism>
    <name type="scientific">Streptococcus equi subsp. zooepidemicus (strain H70)</name>
    <dbReference type="NCBI Taxonomy" id="553483"/>
    <lineage>
        <taxon>Bacteria</taxon>
        <taxon>Bacillati</taxon>
        <taxon>Bacillota</taxon>
        <taxon>Bacilli</taxon>
        <taxon>Lactobacillales</taxon>
        <taxon>Streptococcaceae</taxon>
        <taxon>Streptococcus</taxon>
    </lineage>
</organism>